<accession>A2CI45</accession>
<evidence type="ECO:0000250" key="1"/>
<evidence type="ECO:0000305" key="2"/>
<geneLocation type="chloroplast"/>
<organism>
    <name type="scientific">Chlorokybus atmophyticus</name>
    <name type="common">Soil alga</name>
    <dbReference type="NCBI Taxonomy" id="3144"/>
    <lineage>
        <taxon>Eukaryota</taxon>
        <taxon>Viridiplantae</taxon>
        <taxon>Streptophyta</taxon>
        <taxon>Chlorokybophyceae</taxon>
        <taxon>Chlorokybales</taxon>
        <taxon>Chlorokybaceae</taxon>
        <taxon>Chlorokybus</taxon>
    </lineage>
</organism>
<protein>
    <recommendedName>
        <fullName evidence="2">Large ribosomal subunit protein uL5c</fullName>
    </recommendedName>
    <alternativeName>
        <fullName>50S ribosomal protein L5, chloroplastic</fullName>
    </alternativeName>
</protein>
<feature type="chain" id="PRO_0000365647" description="Large ribosomal subunit protein uL5c">
    <location>
        <begin position="1"/>
        <end position="185"/>
    </location>
</feature>
<keyword id="KW-0150">Chloroplast</keyword>
<keyword id="KW-0934">Plastid</keyword>
<keyword id="KW-0687">Ribonucleoprotein</keyword>
<keyword id="KW-0689">Ribosomal protein</keyword>
<keyword id="KW-0694">RNA-binding</keyword>
<keyword id="KW-0699">rRNA-binding</keyword>
<dbReference type="EMBL" id="DQ422812">
    <property type="protein sequence ID" value="ABM87964.1"/>
    <property type="molecule type" value="Genomic_DNA"/>
</dbReference>
<dbReference type="RefSeq" id="YP_001019086.1">
    <property type="nucleotide sequence ID" value="NC_008822.1"/>
</dbReference>
<dbReference type="SMR" id="A2CI45"/>
<dbReference type="GeneID" id="4783228"/>
<dbReference type="GO" id="GO:0009507">
    <property type="term" value="C:chloroplast"/>
    <property type="evidence" value="ECO:0007669"/>
    <property type="project" value="UniProtKB-SubCell"/>
</dbReference>
<dbReference type="GO" id="GO:1990904">
    <property type="term" value="C:ribonucleoprotein complex"/>
    <property type="evidence" value="ECO:0007669"/>
    <property type="project" value="UniProtKB-KW"/>
</dbReference>
<dbReference type="GO" id="GO:0005840">
    <property type="term" value="C:ribosome"/>
    <property type="evidence" value="ECO:0007669"/>
    <property type="project" value="UniProtKB-KW"/>
</dbReference>
<dbReference type="GO" id="GO:0019843">
    <property type="term" value="F:rRNA binding"/>
    <property type="evidence" value="ECO:0007669"/>
    <property type="project" value="UniProtKB-UniRule"/>
</dbReference>
<dbReference type="GO" id="GO:0003735">
    <property type="term" value="F:structural constituent of ribosome"/>
    <property type="evidence" value="ECO:0007669"/>
    <property type="project" value="InterPro"/>
</dbReference>
<dbReference type="GO" id="GO:0006412">
    <property type="term" value="P:translation"/>
    <property type="evidence" value="ECO:0007669"/>
    <property type="project" value="UniProtKB-UniRule"/>
</dbReference>
<dbReference type="FunFam" id="3.30.1440.10:FF:000001">
    <property type="entry name" value="50S ribosomal protein L5"/>
    <property type="match status" value="1"/>
</dbReference>
<dbReference type="Gene3D" id="3.30.1440.10">
    <property type="match status" value="1"/>
</dbReference>
<dbReference type="HAMAP" id="MF_01333_B">
    <property type="entry name" value="Ribosomal_uL5_B"/>
    <property type="match status" value="1"/>
</dbReference>
<dbReference type="InterPro" id="IPR002132">
    <property type="entry name" value="Ribosomal_uL5"/>
</dbReference>
<dbReference type="InterPro" id="IPR020930">
    <property type="entry name" value="Ribosomal_uL5_bac-type"/>
</dbReference>
<dbReference type="InterPro" id="IPR031309">
    <property type="entry name" value="Ribosomal_uL5_C"/>
</dbReference>
<dbReference type="InterPro" id="IPR020929">
    <property type="entry name" value="Ribosomal_uL5_CS"/>
</dbReference>
<dbReference type="InterPro" id="IPR022803">
    <property type="entry name" value="Ribosomal_uL5_dom_sf"/>
</dbReference>
<dbReference type="InterPro" id="IPR031310">
    <property type="entry name" value="Ribosomal_uL5_N"/>
</dbReference>
<dbReference type="NCBIfam" id="NF000585">
    <property type="entry name" value="PRK00010.1"/>
    <property type="match status" value="1"/>
</dbReference>
<dbReference type="PANTHER" id="PTHR11994">
    <property type="entry name" value="60S RIBOSOMAL PROTEIN L11-RELATED"/>
    <property type="match status" value="1"/>
</dbReference>
<dbReference type="Pfam" id="PF00281">
    <property type="entry name" value="Ribosomal_L5"/>
    <property type="match status" value="1"/>
</dbReference>
<dbReference type="Pfam" id="PF00673">
    <property type="entry name" value="Ribosomal_L5_C"/>
    <property type="match status" value="1"/>
</dbReference>
<dbReference type="PIRSF" id="PIRSF002161">
    <property type="entry name" value="Ribosomal_L5"/>
    <property type="match status" value="1"/>
</dbReference>
<dbReference type="SUPFAM" id="SSF55282">
    <property type="entry name" value="RL5-like"/>
    <property type="match status" value="1"/>
</dbReference>
<dbReference type="PROSITE" id="PS00358">
    <property type="entry name" value="RIBOSOMAL_L5"/>
    <property type="match status" value="1"/>
</dbReference>
<comment type="function">
    <text evidence="1">Binds 5S rRNA, forms part of the central protuberance of the 50S subunit.</text>
</comment>
<comment type="subunit">
    <text evidence="1">Part of the 50S ribosomal subunit; contacts the 5S rRNA.</text>
</comment>
<comment type="subcellular location">
    <subcellularLocation>
        <location>Plastid</location>
        <location>Chloroplast</location>
    </subcellularLocation>
</comment>
<comment type="similarity">
    <text evidence="2">Belongs to the universal ribosomal protein uL5 family.</text>
</comment>
<reference key="1">
    <citation type="journal article" date="2007" name="BMC Biol.">
        <title>A clade uniting the green algae Mesostigma viride and Chlorokybus atmophyticus represents the deepest branch of the Streptophyta in chloroplast genome-based phylogenies.</title>
        <authorList>
            <person name="Lemieux C."/>
            <person name="Otis C."/>
            <person name="Turmel M."/>
        </authorList>
    </citation>
    <scope>NUCLEOTIDE SEQUENCE [LARGE SCALE GENOMIC DNA]</scope>
    <source>
        <strain>SAG 48.80</strain>
    </source>
</reference>
<proteinExistence type="inferred from homology"/>
<name>RK5_CHLAT</name>
<gene>
    <name type="primary">rpl5</name>
</gene>
<sequence length="185" mass="20907">MVQRLKAIYLEKAAPRLREMFEYKNVHQIPRIEKIIINCGLGEASQNAKSLDSAMKELSIIAGQKGVITRAKKAIANFKLRKDMPVGISITLRGNSMYAFLDRLINLALPRIKDFQGVSSKGFDGHGNYNLGLKEQLMFPEINFDQIDQIRGMDISIVTTCNTDSEGFYLLETLGMPFKEKFTKN</sequence>